<evidence type="ECO:0000255" key="1"/>
<evidence type="ECO:0000305" key="2"/>
<feature type="chain" id="PRO_0000054229" description="Uncharacterized transporter in pepV 3'region">
    <location>
        <begin position="1"/>
        <end position="175" status="greater than"/>
    </location>
</feature>
<feature type="transmembrane region" description="Helical" evidence="1">
    <location>
        <begin position="25"/>
        <end position="45"/>
    </location>
</feature>
<feature type="transmembrane region" description="Helical" evidence="1">
    <location>
        <begin position="46"/>
        <end position="66"/>
    </location>
</feature>
<feature type="transmembrane region" description="Helical" evidence="1">
    <location>
        <begin position="97"/>
        <end position="117"/>
    </location>
</feature>
<feature type="transmembrane region" description="Helical" evidence="1">
    <location>
        <begin position="124"/>
        <end position="144"/>
    </location>
</feature>
<feature type="transmembrane region" description="Helical" evidence="1">
    <location>
        <begin position="155"/>
        <end position="175"/>
    </location>
</feature>
<feature type="non-terminal residue">
    <location>
        <position position="175"/>
    </location>
</feature>
<keyword id="KW-0029">Amino-acid transport</keyword>
<keyword id="KW-1003">Cell membrane</keyword>
<keyword id="KW-0472">Membrane</keyword>
<keyword id="KW-0812">Transmembrane</keyword>
<keyword id="KW-1133">Transmembrane helix</keyword>
<keyword id="KW-0813">Transport</keyword>
<protein>
    <recommendedName>
        <fullName>Uncharacterized transporter in pepV 3'region</fullName>
    </recommendedName>
    <alternativeName>
        <fullName>ORF2</fullName>
    </alternativeName>
</protein>
<name>YPEV_LACDL</name>
<comment type="subcellular location">
    <subcellularLocation>
        <location evidence="2">Cell membrane</location>
        <topology evidence="2">Multi-pass membrane protein</topology>
    </subcellularLocation>
</comment>
<comment type="similarity">
    <text evidence="2">Belongs to the amino acid-polyamine-organocation (APC) superfamily.</text>
</comment>
<accession>P45495</accession>
<sequence>MLYGDRSIENTDGTIRSLSNRHVQMIAIGGTIGTGLFLGAGTTISATGPSVIFIYAIMGLFFFFLLRALGEMFYFDSNSHTFVSFITRYLGEAAGRFAGWTYWIGILFACMAELTAVSTYVQYWLPGLPAWLIEVSVLGLLTLLNLTAAKLFGETEFWFAMIKIIAIISLVVTGI</sequence>
<proteinExistence type="inferred from homology"/>
<dbReference type="EMBL" id="Z31377">
    <property type="protein sequence ID" value="CAA83253.1"/>
    <property type="molecule type" value="Genomic_DNA"/>
</dbReference>
<dbReference type="PIR" id="S57903">
    <property type="entry name" value="S57903"/>
</dbReference>
<dbReference type="SMR" id="P45495"/>
<dbReference type="GO" id="GO:0005886">
    <property type="term" value="C:plasma membrane"/>
    <property type="evidence" value="ECO:0007669"/>
    <property type="project" value="UniProtKB-SubCell"/>
</dbReference>
<dbReference type="GO" id="GO:0006865">
    <property type="term" value="P:amino acid transport"/>
    <property type="evidence" value="ECO:0007669"/>
    <property type="project" value="UniProtKB-KW"/>
</dbReference>
<dbReference type="GO" id="GO:0055085">
    <property type="term" value="P:transmembrane transport"/>
    <property type="evidence" value="ECO:0007669"/>
    <property type="project" value="InterPro"/>
</dbReference>
<dbReference type="Gene3D" id="1.20.1740.10">
    <property type="entry name" value="Amino acid/polyamine transporter I"/>
    <property type="match status" value="1"/>
</dbReference>
<dbReference type="InterPro" id="IPR004841">
    <property type="entry name" value="AA-permease/SLC12A_dom"/>
</dbReference>
<dbReference type="InterPro" id="IPR004840">
    <property type="entry name" value="Amino_acid_permease_CS"/>
</dbReference>
<dbReference type="PANTHER" id="PTHR43495:SF2">
    <property type="entry name" value="D-SERINE_D-ALANINE_GLYCINE TRANSPORTER"/>
    <property type="match status" value="1"/>
</dbReference>
<dbReference type="PANTHER" id="PTHR43495">
    <property type="entry name" value="GABA PERMEASE"/>
    <property type="match status" value="1"/>
</dbReference>
<dbReference type="Pfam" id="PF00324">
    <property type="entry name" value="AA_permease"/>
    <property type="match status" value="1"/>
</dbReference>
<dbReference type="PROSITE" id="PS00218">
    <property type="entry name" value="AMINO_ACID_PERMEASE_1"/>
    <property type="match status" value="1"/>
</dbReference>
<reference key="1">
    <citation type="journal article" date="1994" name="Microbiology">
        <title>Cloning and nucleotide sequence analysis of pepV, a carnosinase gene from Lactobacillus delbrueckii subsp. lactis DSM 7290, and partial characterization of the enzyme.</title>
        <authorList>
            <person name="Vongerichten K.F."/>
            <person name="Klein J.R."/>
            <person name="Matern H."/>
            <person name="Plapp R."/>
        </authorList>
    </citation>
    <scope>NUCLEOTIDE SEQUENCE [GENOMIC DNA]</scope>
    <source>
        <strain>DSM 7290 / WS87</strain>
    </source>
</reference>
<organism>
    <name type="scientific">Lactobacillus delbrueckii subsp. lactis</name>
    <dbReference type="NCBI Taxonomy" id="29397"/>
    <lineage>
        <taxon>Bacteria</taxon>
        <taxon>Bacillati</taxon>
        <taxon>Bacillota</taxon>
        <taxon>Bacilli</taxon>
        <taxon>Lactobacillales</taxon>
        <taxon>Lactobacillaceae</taxon>
        <taxon>Lactobacillus</taxon>
    </lineage>
</organism>